<reference key="1">
    <citation type="journal article" date="2001" name="Plant Physiol.">
        <title>Two types of pea leghemoglobin genes showing different O2-binding affinities and distinct patterns of spatial expression in nodules.</title>
        <authorList>
            <person name="Kawashima K."/>
            <person name="Suganuma N."/>
            <person name="Tamaoki M."/>
            <person name="Kouchi H."/>
        </authorList>
    </citation>
    <scope>NUCLEOTIDE SEQUENCE [MRNA]</scope>
    <scope>TISSUE SPECIFICITY</scope>
    <scope>GENE FAMILY</scope>
    <scope>NOMENCLATURE</scope>
    <source>
        <strain>cv. Sparkle</strain>
        <tissue>Root nodule</tissue>
    </source>
</reference>
<reference key="2">
    <citation type="journal article" date="2001" name="J. Exp. Bot.">
        <title>Abscisic acid induces a decline in nitrogen fixation that involves leghaemoglobin, but is independent of sucrose synthase activity.</title>
        <authorList>
            <person name="Gonzalez E.M."/>
            <person name="Galvez L."/>
            <person name="Arrese-Igor C."/>
        </authorList>
    </citation>
    <scope>REPRESSION BY ABSCISIC ACID</scope>
    <source>
        <strain>cv. Sugar snap</strain>
    </source>
</reference>
<reference key="3">
    <citation type="journal article" date="2010" name="Plant Cell Environ.">
        <title>Ligands of boron in Pisum sativum nodules are involved in regulation of oxygen concentration and rhizobial infection.</title>
        <authorList>
            <person name="Reguera M."/>
            <person name="Wimmer M."/>
            <person name="Bustos P."/>
            <person name="Goldbach H.E."/>
            <person name="Bolanos L."/>
            <person name="Bonilla I."/>
        </authorList>
    </citation>
    <scope>INDUCTION BY BORON</scope>
    <source>
        <strain>cv. Lincoln</strain>
    </source>
</reference>
<sequence length="146" mass="15956">MGFTEKQEALVNSSWELFKQNPSYSVLFYTIILKKAPAAKGMFSFLKDSAEVVDSPKLQAHAEKVFGMVHDSAIQLRASGEVVLGDATLGAIHIQKGVVDPHFVVVKEALLETIKEASGEKWSEELSTAWEVAYEGLASAIKKAMN</sequence>
<keyword id="KW-0963">Cytoplasm</keyword>
<keyword id="KW-0349">Heme</keyword>
<keyword id="KW-0408">Iron</keyword>
<keyword id="KW-0479">Metal-binding</keyword>
<keyword id="KW-0944">Nitration</keyword>
<keyword id="KW-0535">Nitrogen fixation</keyword>
<keyword id="KW-0536">Nodulation</keyword>
<keyword id="KW-0539">Nucleus</keyword>
<keyword id="KW-0561">Oxygen transport</keyword>
<keyword id="KW-0597">Phosphoprotein</keyword>
<keyword id="KW-0813">Transport</keyword>
<name>LGB6_PEA</name>
<dbReference type="EMBL" id="AB015721">
    <property type="protein sequence ID" value="BAA31157.1"/>
    <property type="molecule type" value="mRNA"/>
</dbReference>
<dbReference type="PIR" id="T06221">
    <property type="entry name" value="T06221"/>
</dbReference>
<dbReference type="SMR" id="Q9SAZ0"/>
<dbReference type="GO" id="GO:0005829">
    <property type="term" value="C:cytosol"/>
    <property type="evidence" value="ECO:0007669"/>
    <property type="project" value="UniProtKB-SubCell"/>
</dbReference>
<dbReference type="GO" id="GO:0005634">
    <property type="term" value="C:nucleus"/>
    <property type="evidence" value="ECO:0007669"/>
    <property type="project" value="UniProtKB-SubCell"/>
</dbReference>
<dbReference type="GO" id="GO:0020037">
    <property type="term" value="F:heme binding"/>
    <property type="evidence" value="ECO:0007669"/>
    <property type="project" value="InterPro"/>
</dbReference>
<dbReference type="GO" id="GO:0046872">
    <property type="term" value="F:metal ion binding"/>
    <property type="evidence" value="ECO:0007669"/>
    <property type="project" value="UniProtKB-KW"/>
</dbReference>
<dbReference type="GO" id="GO:0019825">
    <property type="term" value="F:oxygen binding"/>
    <property type="evidence" value="ECO:0007669"/>
    <property type="project" value="InterPro"/>
</dbReference>
<dbReference type="GO" id="GO:0005344">
    <property type="term" value="F:oxygen carrier activity"/>
    <property type="evidence" value="ECO:0007669"/>
    <property type="project" value="UniProtKB-KW"/>
</dbReference>
<dbReference type="GO" id="GO:0009877">
    <property type="term" value="P:nodulation"/>
    <property type="evidence" value="ECO:0007669"/>
    <property type="project" value="UniProtKB-KW"/>
</dbReference>
<dbReference type="GO" id="GO:0009737">
    <property type="term" value="P:response to abscisic acid"/>
    <property type="evidence" value="ECO:0000270"/>
    <property type="project" value="UniProtKB"/>
</dbReference>
<dbReference type="Gene3D" id="1.10.490.10">
    <property type="entry name" value="Globins"/>
    <property type="match status" value="1"/>
</dbReference>
<dbReference type="InterPro" id="IPR000971">
    <property type="entry name" value="Globin"/>
</dbReference>
<dbReference type="InterPro" id="IPR009050">
    <property type="entry name" value="Globin-like_sf"/>
</dbReference>
<dbReference type="InterPro" id="IPR012292">
    <property type="entry name" value="Globin/Proto"/>
</dbReference>
<dbReference type="InterPro" id="IPR001032">
    <property type="entry name" value="Leghaemoglobin-like"/>
</dbReference>
<dbReference type="InterPro" id="IPR019824">
    <property type="entry name" value="Leghaemoglobin_Fe_BS"/>
</dbReference>
<dbReference type="PANTHER" id="PTHR22924">
    <property type="entry name" value="LEGHEMOGLOBIN-RELATED"/>
    <property type="match status" value="1"/>
</dbReference>
<dbReference type="PANTHER" id="PTHR22924:SF92">
    <property type="entry name" value="NON-SYMBIOTIC HEMOGLOBIN 2"/>
    <property type="match status" value="1"/>
</dbReference>
<dbReference type="Pfam" id="PF00042">
    <property type="entry name" value="Globin"/>
    <property type="match status" value="1"/>
</dbReference>
<dbReference type="PRINTS" id="PR00188">
    <property type="entry name" value="PLANTGLOBIN"/>
</dbReference>
<dbReference type="SUPFAM" id="SSF46458">
    <property type="entry name" value="Globin-like"/>
    <property type="match status" value="1"/>
</dbReference>
<dbReference type="PROSITE" id="PS01033">
    <property type="entry name" value="GLOBIN"/>
    <property type="match status" value="1"/>
</dbReference>
<dbReference type="PROSITE" id="PS00208">
    <property type="entry name" value="PLANT_GLOBIN"/>
    <property type="match status" value="1"/>
</dbReference>
<comment type="function">
    <text evidence="3 6">Leghemoglobin that reversibly binds oxygen O(2) through a pentacoordinated heme iron (By similarity). In root nodules, facilitates the diffusion of oxygen to the bacteroids while preventing the bacterial nitrogenase from being inactivated by buffering dioxygen, nitric oxide and carbon monoxide, and promoting the formation of reactive oxygen species (ROS, e.g. H(2)O(2)) (By similarity). This role is essential for symbiotic nitrogen fixation (SNF) (By similarity).</text>
</comment>
<comment type="subunit">
    <text evidence="4">Monomer.</text>
</comment>
<comment type="subcellular location">
    <subcellularLocation>
        <location evidence="4">Cytoplasm</location>
        <location evidence="4">Cytosol</location>
    </subcellularLocation>
    <subcellularLocation>
        <location evidence="4">Nucleus</location>
    </subcellularLocation>
</comment>
<comment type="tissue specificity">
    <text evidence="8">Root nodules.</text>
</comment>
<comment type="induction">
    <text evidence="9 10">Strongly reduced levels in boron-deficient nodules (PubMed:20132519). Inhibited by abscisic acid (ABA) in parallel with lower nitrogen fixation in nodules (PubMed:11283173).</text>
</comment>
<comment type="PTM">
    <text evidence="2">Nitrated in effective nodules and particularly in hypoxic conditions; this mechanism may play a protective role in the symbiosis by buffering toxic peroxynitrite NO(2)(-). Nitration level decrease during nodule senescence.</text>
</comment>
<comment type="PTM">
    <text evidence="5">Phosphorylation at Ser-44 disrupts the molecular environment of its porphyrin ring oxygen binding pocket, thus leading to a reduced oxygen consumption and to the delivery of oxygen O(2) to symbiosomes.</text>
</comment>
<comment type="similarity">
    <text evidence="12">Belongs to the plant globin family.</text>
</comment>
<organism>
    <name type="scientific">Pisum sativum</name>
    <name type="common">Garden pea</name>
    <name type="synonym">Lathyrus oleraceus</name>
    <dbReference type="NCBI Taxonomy" id="3888"/>
    <lineage>
        <taxon>Eukaryota</taxon>
        <taxon>Viridiplantae</taxon>
        <taxon>Streptophyta</taxon>
        <taxon>Embryophyta</taxon>
        <taxon>Tracheophyta</taxon>
        <taxon>Spermatophyta</taxon>
        <taxon>Magnoliopsida</taxon>
        <taxon>eudicotyledons</taxon>
        <taxon>Gunneridae</taxon>
        <taxon>Pentapetalae</taxon>
        <taxon>rosids</taxon>
        <taxon>fabids</taxon>
        <taxon>Fabales</taxon>
        <taxon>Fabaceae</taxon>
        <taxon>Papilionoideae</taxon>
        <taxon>50 kb inversion clade</taxon>
        <taxon>NPAAA clade</taxon>
        <taxon>Hologalegina</taxon>
        <taxon>IRL clade</taxon>
        <taxon>Fabeae</taxon>
        <taxon>Pisum</taxon>
    </lineage>
</organism>
<feature type="initiator methionine" description="Removed" evidence="1">
    <location>
        <position position="1"/>
    </location>
</feature>
<feature type="chain" id="PRO_0000192996" description="Leghemoglobin Lb120-34">
    <location>
        <begin position="2"/>
        <end position="146"/>
    </location>
</feature>
<feature type="domain" description="Globin" evidence="7">
    <location>
        <begin position="2"/>
        <end position="146"/>
    </location>
</feature>
<feature type="binding site" evidence="4">
    <location>
        <position position="44"/>
    </location>
    <ligand>
        <name>heme b</name>
        <dbReference type="ChEBI" id="CHEBI:60344"/>
    </ligand>
</feature>
<feature type="binding site" evidence="4">
    <location>
        <position position="61"/>
    </location>
    <ligand>
        <name>O2</name>
        <dbReference type="ChEBI" id="CHEBI:15379"/>
    </ligand>
</feature>
<feature type="binding site" evidence="4">
    <location>
        <position position="64"/>
    </location>
    <ligand>
        <name>heme b</name>
        <dbReference type="ChEBI" id="CHEBI:60344"/>
    </ligand>
</feature>
<feature type="binding site" description="proximal binding residue" evidence="7">
    <location>
        <position position="93"/>
    </location>
    <ligand>
        <name>heme b</name>
        <dbReference type="ChEBI" id="CHEBI:60344"/>
    </ligand>
    <ligandPart>
        <name>Fe</name>
        <dbReference type="ChEBI" id="CHEBI:18248"/>
    </ligandPart>
</feature>
<feature type="binding site" evidence="4">
    <location>
        <position position="96"/>
    </location>
    <ligand>
        <name>heme b</name>
        <dbReference type="ChEBI" id="CHEBI:60344"/>
    </ligand>
</feature>
<feature type="modified residue" description="Nitrated tyrosine" evidence="2">
    <location>
        <position position="24"/>
    </location>
</feature>
<feature type="modified residue" description="Nitrated tyrosine" evidence="2">
    <location>
        <position position="29"/>
    </location>
</feature>
<feature type="modified residue" description="Phosphoserine" evidence="5">
    <location>
        <position position="44"/>
    </location>
</feature>
<feature type="modified residue" description="Nitrated tyrosine" evidence="2">
    <location>
        <position position="134"/>
    </location>
</feature>
<proteinExistence type="evidence at transcript level"/>
<evidence type="ECO:0000250" key="1">
    <source>
        <dbReference type="UniProtKB" id="P02233"/>
    </source>
</evidence>
<evidence type="ECO:0000250" key="2">
    <source>
        <dbReference type="UniProtKB" id="P02234"/>
    </source>
</evidence>
<evidence type="ECO:0000250" key="3">
    <source>
        <dbReference type="UniProtKB" id="P02237"/>
    </source>
</evidence>
<evidence type="ECO:0000250" key="4">
    <source>
        <dbReference type="UniProtKB" id="P02240"/>
    </source>
</evidence>
<evidence type="ECO:0000250" key="5">
    <source>
        <dbReference type="UniProtKB" id="Q3C1F7"/>
    </source>
</evidence>
<evidence type="ECO:0000250" key="6">
    <source>
        <dbReference type="UniProtKB" id="Q43296"/>
    </source>
</evidence>
<evidence type="ECO:0000255" key="7">
    <source>
        <dbReference type="PROSITE-ProRule" id="PRU00238"/>
    </source>
</evidence>
<evidence type="ECO:0000269" key="8">
    <source>
    </source>
</evidence>
<evidence type="ECO:0000269" key="9">
    <source>
    </source>
</evidence>
<evidence type="ECO:0000269" key="10">
    <source>
    </source>
</evidence>
<evidence type="ECO:0000303" key="11">
    <source>
    </source>
</evidence>
<evidence type="ECO:0000305" key="12"/>
<accession>Q9SAZ0</accession>
<protein>
    <recommendedName>
        <fullName evidence="11">Leghemoglobin Lb120-34</fullName>
        <shortName evidence="11">PsLb120-34</shortName>
    </recommendedName>
</protein>